<sequence>MKSNKTIFLILLFLINFNSIYSFNFKKEIKISNDKINLPTYNPWIFQDRFNLYSILINSTNIPVFGEDNSNNCLHGLQLQFEWQNRSGRLEINQGHVNTKSWWGDMNYYLSIIPYLSAMKMGLVPVVEIVSINDQRFCSTYEDCDQEVLNNWDNFFQQIINIRNNGSEGDDQQLLKFMWTAHIGSIDKATKLFTDSLLLLPKNELRFGNGWAHFVDVIATVNFNTNYSTVYHLGQQLPPIMLNSNDTHPSSIESFTKEQRNVVLTMYEINDLSSNNLVWNSFMYLLKKMTKNEICRNLINNEINIFLNSPVPTIIEILFDILTNNC</sequence>
<reference key="1">
    <citation type="journal article" date="2005" name="Nature">
        <title>The genome of the social amoeba Dictyostelium discoideum.</title>
        <authorList>
            <person name="Eichinger L."/>
            <person name="Pachebat J.A."/>
            <person name="Gloeckner G."/>
            <person name="Rajandream M.A."/>
            <person name="Sucgang R."/>
            <person name="Berriman M."/>
            <person name="Song J."/>
            <person name="Olsen R."/>
            <person name="Szafranski K."/>
            <person name="Xu Q."/>
            <person name="Tunggal B."/>
            <person name="Kummerfeld S."/>
            <person name="Madera M."/>
            <person name="Konfortov B.A."/>
            <person name="Rivero F."/>
            <person name="Bankier A.T."/>
            <person name="Lehmann R."/>
            <person name="Hamlin N."/>
            <person name="Davies R."/>
            <person name="Gaudet P."/>
            <person name="Fey P."/>
            <person name="Pilcher K."/>
            <person name="Chen G."/>
            <person name="Saunders D."/>
            <person name="Sodergren E.J."/>
            <person name="Davis P."/>
            <person name="Kerhornou A."/>
            <person name="Nie X."/>
            <person name="Hall N."/>
            <person name="Anjard C."/>
            <person name="Hemphill L."/>
            <person name="Bason N."/>
            <person name="Farbrother P."/>
            <person name="Desany B."/>
            <person name="Just E."/>
            <person name="Morio T."/>
            <person name="Rost R."/>
            <person name="Churcher C.M."/>
            <person name="Cooper J."/>
            <person name="Haydock S."/>
            <person name="van Driessche N."/>
            <person name="Cronin A."/>
            <person name="Goodhead I."/>
            <person name="Muzny D.M."/>
            <person name="Mourier T."/>
            <person name="Pain A."/>
            <person name="Lu M."/>
            <person name="Harper D."/>
            <person name="Lindsay R."/>
            <person name="Hauser H."/>
            <person name="James K.D."/>
            <person name="Quiles M."/>
            <person name="Madan Babu M."/>
            <person name="Saito T."/>
            <person name="Buchrieser C."/>
            <person name="Wardroper A."/>
            <person name="Felder M."/>
            <person name="Thangavelu M."/>
            <person name="Johnson D."/>
            <person name="Knights A."/>
            <person name="Loulseged H."/>
            <person name="Mungall K.L."/>
            <person name="Oliver K."/>
            <person name="Price C."/>
            <person name="Quail M.A."/>
            <person name="Urushihara H."/>
            <person name="Hernandez J."/>
            <person name="Rabbinowitsch E."/>
            <person name="Steffen D."/>
            <person name="Sanders M."/>
            <person name="Ma J."/>
            <person name="Kohara Y."/>
            <person name="Sharp S."/>
            <person name="Simmonds M.N."/>
            <person name="Spiegler S."/>
            <person name="Tivey A."/>
            <person name="Sugano S."/>
            <person name="White B."/>
            <person name="Walker D."/>
            <person name="Woodward J.R."/>
            <person name="Winckler T."/>
            <person name="Tanaka Y."/>
            <person name="Shaulsky G."/>
            <person name="Schleicher M."/>
            <person name="Weinstock G.M."/>
            <person name="Rosenthal A."/>
            <person name="Cox E.C."/>
            <person name="Chisholm R.L."/>
            <person name="Gibbs R.A."/>
            <person name="Loomis W.F."/>
            <person name="Platzer M."/>
            <person name="Kay R.R."/>
            <person name="Williams J.G."/>
            <person name="Dear P.H."/>
            <person name="Noegel A.A."/>
            <person name="Barrell B.G."/>
            <person name="Kuspa A."/>
        </authorList>
    </citation>
    <scope>NUCLEOTIDE SEQUENCE [LARGE SCALE GENOMIC DNA]</scope>
    <source>
        <strain>AX4</strain>
    </source>
</reference>
<reference key="2">
    <citation type="journal article" date="2003" name="Mech. Dev.">
        <title>Construction of a gamete-enriched gene pool and RNAi-mediated functional analysis in Dictyostelium discoideum.</title>
        <authorList>
            <person name="Muramoto T."/>
            <person name="Suzuki K."/>
            <person name="Shimizu H."/>
            <person name="Kohara Y."/>
            <person name="Kohriki E."/>
            <person name="Obara S."/>
            <person name="Tanaka Y."/>
            <person name="Urushihara H."/>
        </authorList>
    </citation>
    <scope>DEVELOPMENTAL STAGE [LARGE SCALE ANALYSIS]</scope>
</reference>
<comment type="subcellular location">
    <subcellularLocation>
        <location evidence="1 2">Secreted</location>
    </subcellularLocation>
</comment>
<comment type="developmental stage">
    <text evidence="4">Highly enriched in gametes.</text>
</comment>
<comment type="similarity">
    <text evidence="5">Belongs to the LEG1 family.</text>
</comment>
<keyword id="KW-0325">Glycoprotein</keyword>
<keyword id="KW-1185">Reference proteome</keyword>
<keyword id="KW-0964">Secreted</keyword>
<keyword id="KW-0732">Signal</keyword>
<feature type="signal peptide" evidence="3">
    <location>
        <begin position="1"/>
        <end position="22"/>
    </location>
</feature>
<feature type="chain" id="PRO_0000393096" description="Protein LEG1 homolog">
    <location>
        <begin position="23"/>
        <end position="326"/>
    </location>
</feature>
<feature type="glycosylation site" description="N-linked (GlcNAc...) asparagine" evidence="3">
    <location>
        <position position="58"/>
    </location>
</feature>
<feature type="glycosylation site" description="N-linked (GlcNAc...) asparagine" evidence="3">
    <location>
        <position position="85"/>
    </location>
</feature>
<feature type="glycosylation site" description="N-linked (GlcNAc...) asparagine" evidence="3">
    <location>
        <position position="165"/>
    </location>
</feature>
<feature type="glycosylation site" description="N-linked (GlcNAc...) asparagine" evidence="3">
    <location>
        <position position="226"/>
    </location>
</feature>
<feature type="glycosylation site" description="N-linked (GlcNAc...) asparagine" evidence="3">
    <location>
        <position position="245"/>
    </location>
</feature>
<protein>
    <recommendedName>
        <fullName evidence="1 2">Protein LEG1 homolog</fullName>
    </recommendedName>
</protein>
<proteinExistence type="evidence at transcript level"/>
<evidence type="ECO:0000250" key="1">
    <source>
        <dbReference type="UniProtKB" id="A5PF61"/>
    </source>
</evidence>
<evidence type="ECO:0000250" key="2">
    <source>
        <dbReference type="UniProtKB" id="Q4QRF7"/>
    </source>
</evidence>
<evidence type="ECO:0000255" key="3"/>
<evidence type="ECO:0000269" key="4">
    <source>
    </source>
</evidence>
<evidence type="ECO:0000305" key="5"/>
<accession>Q54KF5</accession>
<name>LEG1H_DICDI</name>
<gene>
    <name evidence="1 2" type="primary">leg1</name>
    <name type="ORF">DDB_G0287367</name>
</gene>
<organism>
    <name type="scientific">Dictyostelium discoideum</name>
    <name type="common">Social amoeba</name>
    <dbReference type="NCBI Taxonomy" id="44689"/>
    <lineage>
        <taxon>Eukaryota</taxon>
        <taxon>Amoebozoa</taxon>
        <taxon>Evosea</taxon>
        <taxon>Eumycetozoa</taxon>
        <taxon>Dictyostelia</taxon>
        <taxon>Dictyosteliales</taxon>
        <taxon>Dictyosteliaceae</taxon>
        <taxon>Dictyostelium</taxon>
    </lineage>
</organism>
<dbReference type="EMBL" id="AAFI02000100">
    <property type="protein sequence ID" value="EAL63751.1"/>
    <property type="molecule type" value="Genomic_DNA"/>
</dbReference>
<dbReference type="RefSeq" id="XP_637268.1">
    <property type="nucleotide sequence ID" value="XM_632176.1"/>
</dbReference>
<dbReference type="SMR" id="Q54KF5"/>
<dbReference type="FunCoup" id="Q54KF5">
    <property type="interactions" value="2"/>
</dbReference>
<dbReference type="GlyCosmos" id="Q54KF5">
    <property type="glycosylation" value="5 sites, No reported glycans"/>
</dbReference>
<dbReference type="GlyGen" id="Q54KF5">
    <property type="glycosylation" value="5 sites"/>
</dbReference>
<dbReference type="PaxDb" id="44689-DDB0232011"/>
<dbReference type="EnsemblProtists" id="EAL63751">
    <property type="protein sequence ID" value="EAL63751"/>
    <property type="gene ID" value="DDB_G0287367"/>
</dbReference>
<dbReference type="GeneID" id="8626099"/>
<dbReference type="KEGG" id="ddi:DDB_G0287367"/>
<dbReference type="dictyBase" id="DDB_G0287367"/>
<dbReference type="VEuPathDB" id="AmoebaDB:DDB_G0287367"/>
<dbReference type="eggNOG" id="ENOG502QVPP">
    <property type="taxonomic scope" value="Eukaryota"/>
</dbReference>
<dbReference type="HOGENOM" id="CLU_071068_0_0_1"/>
<dbReference type="InParanoid" id="Q54KF5"/>
<dbReference type="PhylomeDB" id="Q54KF5"/>
<dbReference type="PRO" id="PR:Q54KF5"/>
<dbReference type="Proteomes" id="UP000002195">
    <property type="component" value="Chromosome 5"/>
</dbReference>
<dbReference type="GO" id="GO:0005615">
    <property type="term" value="C:extracellular space"/>
    <property type="evidence" value="ECO:0000318"/>
    <property type="project" value="GO_Central"/>
</dbReference>
<dbReference type="InterPro" id="IPR008499">
    <property type="entry name" value="Leg1"/>
</dbReference>
<dbReference type="PANTHER" id="PTHR18820">
    <property type="entry name" value="LEG1"/>
    <property type="match status" value="1"/>
</dbReference>
<dbReference type="PANTHER" id="PTHR18820:SF1">
    <property type="entry name" value="PROTEIN LEG1 HOMOLOG"/>
    <property type="match status" value="1"/>
</dbReference>
<dbReference type="Pfam" id="PF05612">
    <property type="entry name" value="Leg1"/>
    <property type="match status" value="1"/>
</dbReference>